<name>TAL_PSEP7</name>
<reference key="1">
    <citation type="submission" date="2007-06" db="EMBL/GenBank/DDBJ databases">
        <authorList>
            <person name="Dodson R.J."/>
            <person name="Harkins D."/>
            <person name="Paulsen I.T."/>
        </authorList>
    </citation>
    <scope>NUCLEOTIDE SEQUENCE [LARGE SCALE GENOMIC DNA]</scope>
    <source>
        <strain>DSM 24068 / PA7</strain>
    </source>
</reference>
<sequence length="307" mass="33961">MTSKLEQLKQYTTVVADTGDFDAIARLKPVDATTNPSLLLKAAALPRYAEHLRRATAGSGGDAGLACDRFAVAVGKDILGVIPGRISTEVDARLSFDSEATLARAHRLVELYEEQGVGRERVLIKIASTWEGIRAAEILEREGIQTNLTLLFSFAQAAACADAGVFLISPFVGRIYDWYRKSENRDYVGAEDPGVRSVSRIYRYYKANGYKTVVMGASFRNLGQIEQLAGCDRLTISPDLLQQLADSQGELPRLLLPGDGEPRQVLDESAFRWQMNEDAMATEKLAEGIRLFARDQEKLEYQLATRH</sequence>
<gene>
    <name evidence="2" type="primary">tal</name>
    <name type="ordered locus">PSPA7_2361</name>
</gene>
<evidence type="ECO:0000250" key="1"/>
<evidence type="ECO:0000255" key="2">
    <source>
        <dbReference type="HAMAP-Rule" id="MF_00492"/>
    </source>
</evidence>
<dbReference type="EC" id="2.2.1.2" evidence="2"/>
<dbReference type="EMBL" id="CP000744">
    <property type="protein sequence ID" value="ABR86225.1"/>
    <property type="molecule type" value="Genomic_DNA"/>
</dbReference>
<dbReference type="RefSeq" id="WP_012075288.1">
    <property type="nucleotide sequence ID" value="NC_009656.1"/>
</dbReference>
<dbReference type="SMR" id="A6V3U3"/>
<dbReference type="KEGG" id="pap:PSPA7_2361"/>
<dbReference type="HOGENOM" id="CLU_047470_0_1_6"/>
<dbReference type="UniPathway" id="UPA00115">
    <property type="reaction ID" value="UER00414"/>
</dbReference>
<dbReference type="Proteomes" id="UP000001582">
    <property type="component" value="Chromosome"/>
</dbReference>
<dbReference type="GO" id="GO:0005829">
    <property type="term" value="C:cytosol"/>
    <property type="evidence" value="ECO:0007669"/>
    <property type="project" value="TreeGrafter"/>
</dbReference>
<dbReference type="GO" id="GO:0004801">
    <property type="term" value="F:transaldolase activity"/>
    <property type="evidence" value="ECO:0000250"/>
    <property type="project" value="UniProtKB"/>
</dbReference>
<dbReference type="GO" id="GO:0005975">
    <property type="term" value="P:carbohydrate metabolic process"/>
    <property type="evidence" value="ECO:0007669"/>
    <property type="project" value="InterPro"/>
</dbReference>
<dbReference type="GO" id="GO:0006098">
    <property type="term" value="P:pentose-phosphate shunt"/>
    <property type="evidence" value="ECO:0007669"/>
    <property type="project" value="UniProtKB-UniRule"/>
</dbReference>
<dbReference type="CDD" id="cd00957">
    <property type="entry name" value="Transaldolase_TalAB"/>
    <property type="match status" value="1"/>
</dbReference>
<dbReference type="FunFam" id="3.20.20.70:FF:000002">
    <property type="entry name" value="Transaldolase"/>
    <property type="match status" value="1"/>
</dbReference>
<dbReference type="Gene3D" id="3.20.20.70">
    <property type="entry name" value="Aldolase class I"/>
    <property type="match status" value="1"/>
</dbReference>
<dbReference type="HAMAP" id="MF_00492">
    <property type="entry name" value="Transaldolase_1"/>
    <property type="match status" value="1"/>
</dbReference>
<dbReference type="InterPro" id="IPR013785">
    <property type="entry name" value="Aldolase_TIM"/>
</dbReference>
<dbReference type="InterPro" id="IPR001585">
    <property type="entry name" value="TAL/FSA"/>
</dbReference>
<dbReference type="InterPro" id="IPR004730">
    <property type="entry name" value="Transaldolase_1"/>
</dbReference>
<dbReference type="InterPro" id="IPR018225">
    <property type="entry name" value="Transaldolase_AS"/>
</dbReference>
<dbReference type="NCBIfam" id="TIGR00874">
    <property type="entry name" value="talAB"/>
    <property type="match status" value="1"/>
</dbReference>
<dbReference type="PANTHER" id="PTHR10683">
    <property type="entry name" value="TRANSALDOLASE"/>
    <property type="match status" value="1"/>
</dbReference>
<dbReference type="PANTHER" id="PTHR10683:SF18">
    <property type="entry name" value="TRANSALDOLASE"/>
    <property type="match status" value="1"/>
</dbReference>
<dbReference type="Pfam" id="PF00923">
    <property type="entry name" value="TAL_FSA"/>
    <property type="match status" value="1"/>
</dbReference>
<dbReference type="SUPFAM" id="SSF51569">
    <property type="entry name" value="Aldolase"/>
    <property type="match status" value="1"/>
</dbReference>
<dbReference type="PROSITE" id="PS01054">
    <property type="entry name" value="TRANSALDOLASE_1"/>
    <property type="match status" value="1"/>
</dbReference>
<dbReference type="PROSITE" id="PS00958">
    <property type="entry name" value="TRANSALDOLASE_2"/>
    <property type="match status" value="1"/>
</dbReference>
<proteinExistence type="inferred from homology"/>
<keyword id="KW-0963">Cytoplasm</keyword>
<keyword id="KW-0570">Pentose shunt</keyword>
<keyword id="KW-0704">Schiff base</keyword>
<keyword id="KW-0808">Transferase</keyword>
<organism>
    <name type="scientific">Pseudomonas paraeruginosa (strain DSM 24068 / PA7)</name>
    <name type="common">Pseudomonas aeruginosa (strain PA7)</name>
    <dbReference type="NCBI Taxonomy" id="381754"/>
    <lineage>
        <taxon>Bacteria</taxon>
        <taxon>Pseudomonadati</taxon>
        <taxon>Pseudomonadota</taxon>
        <taxon>Gammaproteobacteria</taxon>
        <taxon>Pseudomonadales</taxon>
        <taxon>Pseudomonadaceae</taxon>
        <taxon>Pseudomonas</taxon>
        <taxon>Pseudomonas paraeruginosa</taxon>
    </lineage>
</organism>
<accession>A6V3U3</accession>
<comment type="function">
    <text evidence="2">Transaldolase is important for the balance of metabolites in the pentose-phosphate pathway.</text>
</comment>
<comment type="catalytic activity">
    <reaction evidence="2">
        <text>D-sedoheptulose 7-phosphate + D-glyceraldehyde 3-phosphate = D-erythrose 4-phosphate + beta-D-fructose 6-phosphate</text>
        <dbReference type="Rhea" id="RHEA:17053"/>
        <dbReference type="ChEBI" id="CHEBI:16897"/>
        <dbReference type="ChEBI" id="CHEBI:57483"/>
        <dbReference type="ChEBI" id="CHEBI:57634"/>
        <dbReference type="ChEBI" id="CHEBI:59776"/>
        <dbReference type="EC" id="2.2.1.2"/>
    </reaction>
</comment>
<comment type="pathway">
    <text evidence="2">Carbohydrate degradation; pentose phosphate pathway; D-glyceraldehyde 3-phosphate and beta-D-fructose 6-phosphate from D-ribose 5-phosphate and D-xylulose 5-phosphate (non-oxidative stage): step 2/3.</text>
</comment>
<comment type="subunit">
    <text evidence="1">Homodimer.</text>
</comment>
<comment type="subcellular location">
    <subcellularLocation>
        <location evidence="2">Cytoplasm</location>
    </subcellularLocation>
</comment>
<comment type="similarity">
    <text evidence="2">Belongs to the transaldolase family. Type 1 subfamily.</text>
</comment>
<feature type="chain" id="PRO_1000014511" description="Transaldolase">
    <location>
        <begin position="1"/>
        <end position="307"/>
    </location>
</feature>
<feature type="active site" description="Schiff-base intermediate with substrate" evidence="2">
    <location>
        <position position="125"/>
    </location>
</feature>
<protein>
    <recommendedName>
        <fullName evidence="2">Transaldolase</fullName>
        <ecNumber evidence="2">2.2.1.2</ecNumber>
    </recommendedName>
</protein>